<reference key="1">
    <citation type="journal article" date="2013" name="PLoS Pathog.">
        <title>Deciphering the cryptic genome: genome-wide analyses of the rice pathogen Fusarium fujikuroi reveal complex regulation of secondary metabolism and novel metabolites.</title>
        <authorList>
            <person name="Wiemann P."/>
            <person name="Sieber C.M.K."/>
            <person name="von Bargen K.W."/>
            <person name="Studt L."/>
            <person name="Niehaus E.-M."/>
            <person name="Espino J.J."/>
            <person name="Huss K."/>
            <person name="Michielse C.B."/>
            <person name="Albermann S."/>
            <person name="Wagner D."/>
            <person name="Bergner S.V."/>
            <person name="Connolly L.R."/>
            <person name="Fischer A."/>
            <person name="Reuter G."/>
            <person name="Kleigrewe K."/>
            <person name="Bald T."/>
            <person name="Wingfield B.D."/>
            <person name="Ophir R."/>
            <person name="Freeman S."/>
            <person name="Hippler M."/>
            <person name="Smith K.M."/>
            <person name="Brown D.W."/>
            <person name="Proctor R.H."/>
            <person name="Muensterkoetter M."/>
            <person name="Freitag M."/>
            <person name="Humpf H.-U."/>
            <person name="Gueldener U."/>
            <person name="Tudzynski B."/>
        </authorList>
    </citation>
    <scope>NUCLEOTIDE SEQUENCE [LARGE SCALE GENOMIC DNA]</scope>
    <source>
        <strain>CBS 195.34 / IMI 58289 / NRRL A-6831</strain>
    </source>
</reference>
<reference key="2">
    <citation type="journal article" date="2009" name="Mol. Microbiol.">
        <title>Biosynthesis of the red pigment bikaverin in Fusarium fujikuroi: genes, their function and regulation.</title>
        <authorList>
            <person name="Wiemann P."/>
            <person name="Willmann A."/>
            <person name="Straeten M."/>
            <person name="Kleigrewe K."/>
            <person name="Beyer M."/>
            <person name="Humpf H.U."/>
            <person name="Tudzynski B."/>
        </authorList>
    </citation>
    <scope>FUNCTION</scope>
    <scope>INDUCTION</scope>
    <scope>DISRUPTION PHENOTYPE</scope>
</reference>
<name>BIK6_GIBF5</name>
<feature type="chain" id="PRO_0000436343" description="Efflux pump bik6">
    <location>
        <begin position="1"/>
        <end position="485"/>
    </location>
</feature>
<feature type="transmembrane region" description="Helical" evidence="1">
    <location>
        <begin position="42"/>
        <end position="62"/>
    </location>
</feature>
<feature type="transmembrane region" description="Helical" evidence="1">
    <location>
        <begin position="86"/>
        <end position="106"/>
    </location>
</feature>
<feature type="transmembrane region" description="Helical" evidence="1">
    <location>
        <begin position="108"/>
        <end position="128"/>
    </location>
</feature>
<feature type="transmembrane region" description="Helical" evidence="1">
    <location>
        <begin position="139"/>
        <end position="159"/>
    </location>
</feature>
<feature type="transmembrane region" description="Helical" evidence="1">
    <location>
        <begin position="172"/>
        <end position="192"/>
    </location>
</feature>
<feature type="transmembrane region" description="Helical" evidence="1">
    <location>
        <begin position="199"/>
        <end position="219"/>
    </location>
</feature>
<feature type="transmembrane region" description="Helical" evidence="1">
    <location>
        <begin position="269"/>
        <end position="289"/>
    </location>
</feature>
<feature type="transmembrane region" description="Helical" evidence="1">
    <location>
        <begin position="306"/>
        <end position="326"/>
    </location>
</feature>
<feature type="transmembrane region" description="Helical" evidence="1">
    <location>
        <begin position="353"/>
        <end position="373"/>
    </location>
</feature>
<feature type="transmembrane region" description="Helical" evidence="1">
    <location>
        <begin position="379"/>
        <end position="399"/>
    </location>
</feature>
<feature type="transmembrane region" description="Helical" evidence="1">
    <location>
        <begin position="417"/>
        <end position="437"/>
    </location>
</feature>
<feature type="transmembrane region" description="Helical" evidence="1">
    <location>
        <begin position="447"/>
        <end position="467"/>
    </location>
</feature>
<feature type="glycosylation site" description="N-linked (GlcNAc...) asparagine" evidence="2">
    <location>
        <position position="241"/>
    </location>
</feature>
<proteinExistence type="evidence at transcript level"/>
<protein>
    <recommendedName>
        <fullName evidence="5">Efflux pump bik6</fullName>
    </recommendedName>
    <alternativeName>
        <fullName evidence="4">Bikaverin biosynthesis protein 6</fullName>
    </alternativeName>
</protein>
<keyword id="KW-0325">Glycoprotein</keyword>
<keyword id="KW-0472">Membrane</keyword>
<keyword id="KW-1185">Reference proteome</keyword>
<keyword id="KW-0812">Transmembrane</keyword>
<keyword id="KW-1133">Transmembrane helix</keyword>
<sequence>MNEESNMGGVFKEEEAQSGDVVDFEGDSDTHNPQNWPMGKKVYTTALWALTTCWITFASAIYSAGTAEISEEFHVSYEVANAGTSLLIFGFALGPMLWAPLCEVYGRKWPALAPYFISAAFAFGTATAKDIQTILITRFFAGVFGSSPISITGGSIVDIWTPRQRGTPMVCYGITIAAAPTLGPIIGGAFIASGCGWRWTEYLTGIVMMVQFVLDALWLDESHADVLLTRKASRLRRSTGNFSLHAKWEETSPTFKSLLSTYLVRPFQMLLDPICLLLTIYTSFVYAILYASLESFALEYGRFRRWGPVVSQLPFLSLLIGCLFAAAANIFNNIYYGKKLVANNFKPVPEARLPPMMVGGFAFSAGLFLFGWTSVEHVSSPWPSIIGVFLTGVGFTTIFQSSLQYLVDTFTRYSASAIAANTFVRSMAAGAFPLFVWPMYEKIGIDWGSTIFACISVLLLPAPFLFFKWGYRIRARGEFSKLSTY</sequence>
<evidence type="ECO:0000255" key="1"/>
<evidence type="ECO:0000255" key="2">
    <source>
        <dbReference type="PROSITE-ProRule" id="PRU00498"/>
    </source>
</evidence>
<evidence type="ECO:0000269" key="3">
    <source>
    </source>
</evidence>
<evidence type="ECO:0000303" key="4">
    <source>
    </source>
</evidence>
<evidence type="ECO:0000305" key="5"/>
<dbReference type="EMBL" id="HF679027">
    <property type="protein sequence ID" value="CCT67996.1"/>
    <property type="molecule type" value="Genomic_DNA"/>
</dbReference>
<dbReference type="SMR" id="S0DZN4"/>
<dbReference type="STRING" id="1279085.S0DZN4"/>
<dbReference type="GlyCosmos" id="S0DZN4">
    <property type="glycosylation" value="1 site, No reported glycans"/>
</dbReference>
<dbReference type="EnsemblFungi" id="CCT67996">
    <property type="protein sequence ID" value="CCT67996"/>
    <property type="gene ID" value="FFUJ_06747"/>
</dbReference>
<dbReference type="VEuPathDB" id="FungiDB:FFUJ_06747"/>
<dbReference type="HOGENOM" id="CLU_008455_11_4_1"/>
<dbReference type="Proteomes" id="UP000016800">
    <property type="component" value="Chromosome 5"/>
</dbReference>
<dbReference type="GO" id="GO:0005886">
    <property type="term" value="C:plasma membrane"/>
    <property type="evidence" value="ECO:0007669"/>
    <property type="project" value="TreeGrafter"/>
</dbReference>
<dbReference type="GO" id="GO:0022857">
    <property type="term" value="F:transmembrane transporter activity"/>
    <property type="evidence" value="ECO:0007669"/>
    <property type="project" value="InterPro"/>
</dbReference>
<dbReference type="CDD" id="cd17323">
    <property type="entry name" value="MFS_Tpo1_MDR_like"/>
    <property type="match status" value="1"/>
</dbReference>
<dbReference type="FunFam" id="1.20.1250.20:FF:000011">
    <property type="entry name" value="MFS multidrug transporter, putative"/>
    <property type="match status" value="1"/>
</dbReference>
<dbReference type="Gene3D" id="1.20.1250.20">
    <property type="entry name" value="MFS general substrate transporter like domains"/>
    <property type="match status" value="1"/>
</dbReference>
<dbReference type="InterPro" id="IPR011701">
    <property type="entry name" value="MFS"/>
</dbReference>
<dbReference type="InterPro" id="IPR020846">
    <property type="entry name" value="MFS_dom"/>
</dbReference>
<dbReference type="InterPro" id="IPR036259">
    <property type="entry name" value="MFS_trans_sf"/>
</dbReference>
<dbReference type="PANTHER" id="PTHR23502">
    <property type="entry name" value="MAJOR FACILITATOR SUPERFAMILY"/>
    <property type="match status" value="1"/>
</dbReference>
<dbReference type="PANTHER" id="PTHR23502:SF59">
    <property type="entry name" value="MULTIDRUG TRANSPORTER, PUTATIVE (AFU_ORTHOLOGUE AFUA_1G10370)-RELATED"/>
    <property type="match status" value="1"/>
</dbReference>
<dbReference type="Pfam" id="PF07690">
    <property type="entry name" value="MFS_1"/>
    <property type="match status" value="1"/>
</dbReference>
<dbReference type="SUPFAM" id="SSF103473">
    <property type="entry name" value="MFS general substrate transporter"/>
    <property type="match status" value="1"/>
</dbReference>
<dbReference type="PROSITE" id="PS50850">
    <property type="entry name" value="MFS"/>
    <property type="match status" value="1"/>
</dbReference>
<gene>
    <name evidence="4" type="primary">bik6</name>
    <name type="ORF">FFUJ_06747</name>
</gene>
<accession>S0DZN4</accession>
<organism>
    <name type="scientific">Gibberella fujikuroi (strain CBS 195.34 / IMI 58289 / NRRL A-6831)</name>
    <name type="common">Bakanae and foot rot disease fungus</name>
    <name type="synonym">Fusarium fujikuroi</name>
    <dbReference type="NCBI Taxonomy" id="1279085"/>
    <lineage>
        <taxon>Eukaryota</taxon>
        <taxon>Fungi</taxon>
        <taxon>Dikarya</taxon>
        <taxon>Ascomycota</taxon>
        <taxon>Pezizomycotina</taxon>
        <taxon>Sordariomycetes</taxon>
        <taxon>Hypocreomycetidae</taxon>
        <taxon>Hypocreales</taxon>
        <taxon>Nectriaceae</taxon>
        <taxon>Fusarium</taxon>
        <taxon>Fusarium fujikuroi species complex</taxon>
    </lineage>
</organism>
<comment type="function">
    <text evidence="3">Efflux pump; part of the gene cluster that mediates the biosynthesis of bikaverin, a red pigment also considered as a mycotoxin (PubMed:19400779).</text>
</comment>
<comment type="subcellular location">
    <subcellularLocation>
        <location evidence="1">Membrane</location>
        <topology evidence="1">Multi-pass membrane protein</topology>
    </subcellularLocation>
</comment>
<comment type="induction">
    <text evidence="3">Expression is repressed by glutamine and at alkaline ambient pH and highly induced under nitrogen starvation and acidic pH conditions (PubMed:19400779).</text>
</comment>
<comment type="disruption phenotype">
    <text evidence="3">Leads to decreased production of bikaverin (PubMed:19400779).</text>
</comment>
<comment type="similarity">
    <text evidence="1">Belongs to the major facilitator superfamily.</text>
</comment>